<protein>
    <recommendedName>
        <fullName evidence="1">Large ribosomal subunit protein uL13</fullName>
    </recommendedName>
    <alternativeName>
        <fullName evidence="2">50S ribosomal protein L13</fullName>
    </alternativeName>
</protein>
<organism>
    <name type="scientific">Caldicellulosiruptor bescii (strain ATCC BAA-1888 / DSM 6725 / KCTC 15123 / Z-1320)</name>
    <name type="common">Anaerocellum thermophilum</name>
    <dbReference type="NCBI Taxonomy" id="521460"/>
    <lineage>
        <taxon>Bacteria</taxon>
        <taxon>Bacillati</taxon>
        <taxon>Bacillota</taxon>
        <taxon>Bacillota incertae sedis</taxon>
        <taxon>Caldicellulosiruptorales</taxon>
        <taxon>Caldicellulosiruptoraceae</taxon>
        <taxon>Caldicellulosiruptor</taxon>
    </lineage>
</organism>
<comment type="function">
    <text evidence="1">This protein is one of the early assembly proteins of the 50S ribosomal subunit, although it is not seen to bind rRNA by itself. It is important during the early stages of 50S assembly.</text>
</comment>
<comment type="subunit">
    <text evidence="1">Part of the 50S ribosomal subunit.</text>
</comment>
<comment type="similarity">
    <text evidence="1">Belongs to the universal ribosomal protein uL13 family.</text>
</comment>
<dbReference type="EMBL" id="CP001393">
    <property type="protein sequence ID" value="ACM61147.1"/>
    <property type="molecule type" value="Genomic_DNA"/>
</dbReference>
<dbReference type="RefSeq" id="WP_013291114.1">
    <property type="nucleotide sequence ID" value="NC_012034.1"/>
</dbReference>
<dbReference type="SMR" id="B9MLF7"/>
<dbReference type="STRING" id="521460.Athe_2070"/>
<dbReference type="GeneID" id="31773418"/>
<dbReference type="KEGG" id="ate:Athe_2070"/>
<dbReference type="eggNOG" id="COG0102">
    <property type="taxonomic scope" value="Bacteria"/>
</dbReference>
<dbReference type="HOGENOM" id="CLU_082184_2_2_9"/>
<dbReference type="Proteomes" id="UP000007723">
    <property type="component" value="Chromosome"/>
</dbReference>
<dbReference type="GO" id="GO:0022625">
    <property type="term" value="C:cytosolic large ribosomal subunit"/>
    <property type="evidence" value="ECO:0007669"/>
    <property type="project" value="TreeGrafter"/>
</dbReference>
<dbReference type="GO" id="GO:0003729">
    <property type="term" value="F:mRNA binding"/>
    <property type="evidence" value="ECO:0007669"/>
    <property type="project" value="TreeGrafter"/>
</dbReference>
<dbReference type="GO" id="GO:0003735">
    <property type="term" value="F:structural constituent of ribosome"/>
    <property type="evidence" value="ECO:0007669"/>
    <property type="project" value="InterPro"/>
</dbReference>
<dbReference type="GO" id="GO:0017148">
    <property type="term" value="P:negative regulation of translation"/>
    <property type="evidence" value="ECO:0007669"/>
    <property type="project" value="TreeGrafter"/>
</dbReference>
<dbReference type="GO" id="GO:0006412">
    <property type="term" value="P:translation"/>
    <property type="evidence" value="ECO:0007669"/>
    <property type="project" value="UniProtKB-UniRule"/>
</dbReference>
<dbReference type="CDD" id="cd00392">
    <property type="entry name" value="Ribosomal_L13"/>
    <property type="match status" value="1"/>
</dbReference>
<dbReference type="FunFam" id="3.90.1180.10:FF:000001">
    <property type="entry name" value="50S ribosomal protein L13"/>
    <property type="match status" value="1"/>
</dbReference>
<dbReference type="Gene3D" id="3.90.1180.10">
    <property type="entry name" value="Ribosomal protein L13"/>
    <property type="match status" value="1"/>
</dbReference>
<dbReference type="HAMAP" id="MF_01366">
    <property type="entry name" value="Ribosomal_uL13"/>
    <property type="match status" value="1"/>
</dbReference>
<dbReference type="InterPro" id="IPR005822">
    <property type="entry name" value="Ribosomal_uL13"/>
</dbReference>
<dbReference type="InterPro" id="IPR005823">
    <property type="entry name" value="Ribosomal_uL13_bac-type"/>
</dbReference>
<dbReference type="InterPro" id="IPR036899">
    <property type="entry name" value="Ribosomal_uL13_sf"/>
</dbReference>
<dbReference type="NCBIfam" id="TIGR01066">
    <property type="entry name" value="rplM_bact"/>
    <property type="match status" value="1"/>
</dbReference>
<dbReference type="PANTHER" id="PTHR11545:SF2">
    <property type="entry name" value="LARGE RIBOSOMAL SUBUNIT PROTEIN UL13M"/>
    <property type="match status" value="1"/>
</dbReference>
<dbReference type="PANTHER" id="PTHR11545">
    <property type="entry name" value="RIBOSOMAL PROTEIN L13"/>
    <property type="match status" value="1"/>
</dbReference>
<dbReference type="Pfam" id="PF00572">
    <property type="entry name" value="Ribosomal_L13"/>
    <property type="match status" value="1"/>
</dbReference>
<dbReference type="PIRSF" id="PIRSF002181">
    <property type="entry name" value="Ribosomal_L13"/>
    <property type="match status" value="1"/>
</dbReference>
<dbReference type="SUPFAM" id="SSF52161">
    <property type="entry name" value="Ribosomal protein L13"/>
    <property type="match status" value="1"/>
</dbReference>
<sequence>MKTYLAKPNEVPKKWYVIDATGKPLGRLAAKIAVILRGKHKPQFTPNVDTGDYVIVINAEKVVLTGKKLDKDGYRYHTKYPGGLKFIPYRRLLEKHPEKAIEIAVRGMLPKNRLRDRFMRKLKVYRGPNHPHAAQKPEVLEI</sequence>
<feature type="chain" id="PRO_1000166845" description="Large ribosomal subunit protein uL13">
    <location>
        <begin position="1"/>
        <end position="142"/>
    </location>
</feature>
<evidence type="ECO:0000255" key="1">
    <source>
        <dbReference type="HAMAP-Rule" id="MF_01366"/>
    </source>
</evidence>
<evidence type="ECO:0000305" key="2"/>
<gene>
    <name evidence="1" type="primary">rplM</name>
    <name type="ordered locus">Athe_2070</name>
</gene>
<name>RL13_CALBD</name>
<accession>B9MLF7</accession>
<reference key="1">
    <citation type="submission" date="2009-01" db="EMBL/GenBank/DDBJ databases">
        <title>Complete sequence of chromosome of Caldicellulosiruptor becscii DSM 6725.</title>
        <authorList>
            <person name="Lucas S."/>
            <person name="Copeland A."/>
            <person name="Lapidus A."/>
            <person name="Glavina del Rio T."/>
            <person name="Tice H."/>
            <person name="Bruce D."/>
            <person name="Goodwin L."/>
            <person name="Pitluck S."/>
            <person name="Sims D."/>
            <person name="Meincke L."/>
            <person name="Brettin T."/>
            <person name="Detter J.C."/>
            <person name="Han C."/>
            <person name="Larimer F."/>
            <person name="Land M."/>
            <person name="Hauser L."/>
            <person name="Kyrpides N."/>
            <person name="Ovchinnikova G."/>
            <person name="Kataeva I."/>
            <person name="Adams M.W.W."/>
        </authorList>
    </citation>
    <scope>NUCLEOTIDE SEQUENCE [LARGE SCALE GENOMIC DNA]</scope>
    <source>
        <strain>ATCC BAA-1888 / DSM 6725 / KCTC 15123 / Z-1320</strain>
    </source>
</reference>
<proteinExistence type="inferred from homology"/>
<keyword id="KW-0687">Ribonucleoprotein</keyword>
<keyword id="KW-0689">Ribosomal protein</keyword>